<comment type="function">
    <text>Structural component of the virion.</text>
</comment>
<keyword id="KW-0903">Direct protein sequencing</keyword>
<reference key="1">
    <citation type="journal article" date="2000" name="Arch. Virol.">
        <title>Protein analysis of geographic isolates of shrimp white spot syndrome virus.</title>
        <authorList>
            <person name="Wang Q."/>
            <person name="Poulos B.T."/>
            <person name="Lightner D.V."/>
        </authorList>
    </citation>
    <scope>PROTEIN SEQUENCE</scope>
    <source>
        <strain>South Carolina</strain>
    </source>
</reference>
<name>V23K_WSSV</name>
<sequence length="12" mass="1323">MEFGNLTNLDVA</sequence>
<accession>P82005</accession>
<organismHost>
    <name type="scientific">Crustacea</name>
    <dbReference type="NCBI Taxonomy" id="6657"/>
</organismHost>
<organism>
    <name type="scientific">White spot syndrome virus</name>
    <name type="common">WSSV</name>
    <name type="synonym">White spot bacilliform virus</name>
    <dbReference type="NCBI Taxonomy" id="92652"/>
    <lineage>
        <taxon>Viruses</taxon>
        <taxon>Viruses incertae sedis</taxon>
        <taxon>Naldaviricetes</taxon>
        <taxon>Nimaviridae</taxon>
        <taxon>Whispovirus</taxon>
        <taxon>White spot syndrome virus</taxon>
    </lineage>
</organism>
<protein>
    <recommendedName>
        <fullName>23 kDa structural polyprotein</fullName>
    </recommendedName>
</protein>
<feature type="chain" id="PRO_0000222995" description="23 kDa structural polyprotein">
    <location>
        <begin position="1"/>
        <end position="12" status="greater than"/>
    </location>
</feature>
<feature type="non-terminal residue">
    <location>
        <position position="12"/>
    </location>
</feature>
<proteinExistence type="evidence at protein level"/>